<sequence length="333" mass="35409">MSPITLDLTSDFNPANTTGAGSSSSQPRTLLVAPPSVASHEERISALFSTYPRDTTDLHMLDRLAAGLVTLPTSTYDLILVLTDPDGSRHAEASALLSNRAVWSLLVPALKAGGKLRSEDGTLGRDTTTPEAREAVLAGLVAGADGFTKPDYAEEEAVPLRFGLKRKTNPNPVVAPIQPVAQVVTAAPAGVGFVTLDLNDDLDLDGEDDDDDVIDEDTLLTEADLRRPIQQPPECQPKPGKKRRACKDCTCGLAERLEAEDKARRDKADQALNTLKLKSEDLLELDLTVPGKTGSCGSCALGDAFRCAGCPYLGLPPFKVGEEVSILNNVPQL</sequence>
<name>DRE2_NEUCR</name>
<dbReference type="EMBL" id="BX294026">
    <property type="protein sequence ID" value="CAD71043.1"/>
    <property type="molecule type" value="Genomic_DNA"/>
</dbReference>
<dbReference type="EMBL" id="CM002240">
    <property type="protein sequence ID" value="EAA31725.1"/>
    <property type="molecule type" value="Genomic_DNA"/>
</dbReference>
<dbReference type="RefSeq" id="XP_960961.1">
    <property type="nucleotide sequence ID" value="XM_955868.2"/>
</dbReference>
<dbReference type="STRING" id="367110.Q871G3"/>
<dbReference type="PaxDb" id="5141-EFNCRP00000003811"/>
<dbReference type="EnsemblFungi" id="EAA31725">
    <property type="protein sequence ID" value="EAA31725"/>
    <property type="gene ID" value="NCU04315"/>
</dbReference>
<dbReference type="KEGG" id="ncr:NCU04315"/>
<dbReference type="VEuPathDB" id="FungiDB:NCU04315"/>
<dbReference type="HOGENOM" id="CLU_067152_1_0_1"/>
<dbReference type="InParanoid" id="Q871G3"/>
<dbReference type="OMA" id="DFVMPVT"/>
<dbReference type="OrthoDB" id="311633at2759"/>
<dbReference type="Proteomes" id="UP000001805">
    <property type="component" value="Chromosome 2, Linkage Group V"/>
</dbReference>
<dbReference type="GO" id="GO:0005737">
    <property type="term" value="C:cytoplasm"/>
    <property type="evidence" value="ECO:0000318"/>
    <property type="project" value="GO_Central"/>
</dbReference>
<dbReference type="GO" id="GO:0005758">
    <property type="term" value="C:mitochondrial intermembrane space"/>
    <property type="evidence" value="ECO:0007669"/>
    <property type="project" value="UniProtKB-SubCell"/>
</dbReference>
<dbReference type="GO" id="GO:0051537">
    <property type="term" value="F:2 iron, 2 sulfur cluster binding"/>
    <property type="evidence" value="ECO:0007669"/>
    <property type="project" value="UniProtKB-UniRule"/>
</dbReference>
<dbReference type="GO" id="GO:0051539">
    <property type="term" value="F:4 iron, 4 sulfur cluster binding"/>
    <property type="evidence" value="ECO:0007669"/>
    <property type="project" value="UniProtKB-KW"/>
</dbReference>
<dbReference type="GO" id="GO:0009055">
    <property type="term" value="F:electron transfer activity"/>
    <property type="evidence" value="ECO:0007669"/>
    <property type="project" value="UniProtKB-UniRule"/>
</dbReference>
<dbReference type="GO" id="GO:0046872">
    <property type="term" value="F:metal ion binding"/>
    <property type="evidence" value="ECO:0007669"/>
    <property type="project" value="UniProtKB-KW"/>
</dbReference>
<dbReference type="GO" id="GO:0016226">
    <property type="term" value="P:iron-sulfur cluster assembly"/>
    <property type="evidence" value="ECO:0000318"/>
    <property type="project" value="GO_Central"/>
</dbReference>
<dbReference type="FunFam" id="3.40.50.11000:FF:000002">
    <property type="entry name" value="Fe-S cluster assembly protein DRE2"/>
    <property type="match status" value="1"/>
</dbReference>
<dbReference type="Gene3D" id="3.40.50.11000">
    <property type="entry name" value="Fe-S cluster assembly protein Dre2, N-terminal domain"/>
    <property type="match status" value="1"/>
</dbReference>
<dbReference type="HAMAP" id="MF_03115">
    <property type="entry name" value="Anamorsin"/>
    <property type="match status" value="1"/>
</dbReference>
<dbReference type="InterPro" id="IPR007785">
    <property type="entry name" value="Anamorsin"/>
</dbReference>
<dbReference type="InterPro" id="IPR046408">
    <property type="entry name" value="CIAPIN1"/>
</dbReference>
<dbReference type="InterPro" id="IPR031838">
    <property type="entry name" value="Dre2_N"/>
</dbReference>
<dbReference type="PANTHER" id="PTHR13273">
    <property type="entry name" value="ANAMORSIN"/>
    <property type="match status" value="1"/>
</dbReference>
<dbReference type="PANTHER" id="PTHR13273:SF14">
    <property type="entry name" value="ANAMORSIN"/>
    <property type="match status" value="1"/>
</dbReference>
<dbReference type="Pfam" id="PF05093">
    <property type="entry name" value="CIAPIN1"/>
    <property type="match status" value="1"/>
</dbReference>
<dbReference type="Pfam" id="PF16803">
    <property type="entry name" value="DRE2_N"/>
    <property type="match status" value="1"/>
</dbReference>
<reference key="1">
    <citation type="journal article" date="2003" name="Nucleic Acids Res.">
        <title>What's in the genome of a filamentous fungus? Analysis of the Neurospora genome sequence.</title>
        <authorList>
            <person name="Mannhaupt G."/>
            <person name="Montrone C."/>
            <person name="Haase D."/>
            <person name="Mewes H.-W."/>
            <person name="Aign V."/>
            <person name="Hoheisel J.D."/>
            <person name="Fartmann B."/>
            <person name="Nyakatura G."/>
            <person name="Kempken F."/>
            <person name="Maier J."/>
            <person name="Schulte U."/>
        </authorList>
    </citation>
    <scope>NUCLEOTIDE SEQUENCE [LARGE SCALE GENOMIC DNA]</scope>
    <source>
        <strain>ATCC 24698 / 74-OR23-1A / CBS 708.71 / DSM 1257 / FGSC 987</strain>
    </source>
</reference>
<reference key="2">
    <citation type="journal article" date="2003" name="Nature">
        <title>The genome sequence of the filamentous fungus Neurospora crassa.</title>
        <authorList>
            <person name="Galagan J.E."/>
            <person name="Calvo S.E."/>
            <person name="Borkovich K.A."/>
            <person name="Selker E.U."/>
            <person name="Read N.D."/>
            <person name="Jaffe D.B."/>
            <person name="FitzHugh W."/>
            <person name="Ma L.-J."/>
            <person name="Smirnov S."/>
            <person name="Purcell S."/>
            <person name="Rehman B."/>
            <person name="Elkins T."/>
            <person name="Engels R."/>
            <person name="Wang S."/>
            <person name="Nielsen C.B."/>
            <person name="Butler J."/>
            <person name="Endrizzi M."/>
            <person name="Qui D."/>
            <person name="Ianakiev P."/>
            <person name="Bell-Pedersen D."/>
            <person name="Nelson M.A."/>
            <person name="Werner-Washburne M."/>
            <person name="Selitrennikoff C.P."/>
            <person name="Kinsey J.A."/>
            <person name="Braun E.L."/>
            <person name="Zelter A."/>
            <person name="Schulte U."/>
            <person name="Kothe G.O."/>
            <person name="Jedd G."/>
            <person name="Mewes H.-W."/>
            <person name="Staben C."/>
            <person name="Marcotte E."/>
            <person name="Greenberg D."/>
            <person name="Roy A."/>
            <person name="Foley K."/>
            <person name="Naylor J."/>
            <person name="Stange-Thomann N."/>
            <person name="Barrett R."/>
            <person name="Gnerre S."/>
            <person name="Kamal M."/>
            <person name="Kamvysselis M."/>
            <person name="Mauceli E.W."/>
            <person name="Bielke C."/>
            <person name="Rudd S."/>
            <person name="Frishman D."/>
            <person name="Krystofova S."/>
            <person name="Rasmussen C."/>
            <person name="Metzenberg R.L."/>
            <person name="Perkins D.D."/>
            <person name="Kroken S."/>
            <person name="Cogoni C."/>
            <person name="Macino G."/>
            <person name="Catcheside D.E.A."/>
            <person name="Li W."/>
            <person name="Pratt R.J."/>
            <person name="Osmani S.A."/>
            <person name="DeSouza C.P.C."/>
            <person name="Glass N.L."/>
            <person name="Orbach M.J."/>
            <person name="Berglund J.A."/>
            <person name="Voelker R."/>
            <person name="Yarden O."/>
            <person name="Plamann M."/>
            <person name="Seiler S."/>
            <person name="Dunlap J.C."/>
            <person name="Radford A."/>
            <person name="Aramayo R."/>
            <person name="Natvig D.O."/>
            <person name="Alex L.A."/>
            <person name="Mannhaupt G."/>
            <person name="Ebbole D.J."/>
            <person name="Freitag M."/>
            <person name="Paulsen I."/>
            <person name="Sachs M.S."/>
            <person name="Lander E.S."/>
            <person name="Nusbaum C."/>
            <person name="Birren B.W."/>
        </authorList>
    </citation>
    <scope>NUCLEOTIDE SEQUENCE [LARGE SCALE GENOMIC DNA]</scope>
    <source>
        <strain>ATCC 24698 / 74-OR23-1A / CBS 708.71 / DSM 1257 / FGSC 987</strain>
    </source>
</reference>
<protein>
    <recommendedName>
        <fullName evidence="1">Fe-S cluster assembly protein dre2</fullName>
    </recommendedName>
    <alternativeName>
        <fullName evidence="1">Anamorsin homolog</fullName>
    </alternativeName>
</protein>
<accession>Q871G3</accession>
<keyword id="KW-0001">2Fe-2S</keyword>
<keyword id="KW-0004">4Fe-4S</keyword>
<keyword id="KW-0963">Cytoplasm</keyword>
<keyword id="KW-0408">Iron</keyword>
<keyword id="KW-0411">Iron-sulfur</keyword>
<keyword id="KW-0479">Metal-binding</keyword>
<keyword id="KW-0496">Mitochondrion</keyword>
<keyword id="KW-1185">Reference proteome</keyword>
<organism>
    <name type="scientific">Neurospora crassa (strain ATCC 24698 / 74-OR23-1A / CBS 708.71 / DSM 1257 / FGSC 987)</name>
    <dbReference type="NCBI Taxonomy" id="367110"/>
    <lineage>
        <taxon>Eukaryota</taxon>
        <taxon>Fungi</taxon>
        <taxon>Dikarya</taxon>
        <taxon>Ascomycota</taxon>
        <taxon>Pezizomycotina</taxon>
        <taxon>Sordariomycetes</taxon>
        <taxon>Sordariomycetidae</taxon>
        <taxon>Sordariales</taxon>
        <taxon>Sordariaceae</taxon>
        <taxon>Neurospora</taxon>
    </lineage>
</organism>
<proteinExistence type="inferred from homology"/>
<evidence type="ECO:0000255" key="1">
    <source>
        <dbReference type="HAMAP-Rule" id="MF_03115"/>
    </source>
</evidence>
<evidence type="ECO:0000256" key="2">
    <source>
        <dbReference type="SAM" id="MobiDB-lite"/>
    </source>
</evidence>
<gene>
    <name evidence="1" type="primary">dre2</name>
    <name type="ORF">B7H23.180</name>
    <name type="ORF">NCU043151</name>
</gene>
<comment type="function">
    <text evidence="1">Component of the cytosolic iron-sulfur (Fe-S) protein assembly (CIA) machinery required for the maturation of extramitochondrial Fe-S proteins. Part of an electron transfer chain functioning in an early step of cytosolic Fe-S biogenesis, facilitating the de novo assembly of a [4Fe-4S] cluster on the scaffold complex cfd1-nbp35. Electrons are transferred to dre2 from NADPH via the FAD- and FMN-containing protein tah18. Tah18-dre2 are also required for the assembly of the diferric tyrosyl radical cofactor of ribonucleotide reductase (RNR), probably by providing electrons for reduction during radical cofactor maturation in the catalytic small subunit rnr2.</text>
</comment>
<comment type="cofactor">
    <cofactor evidence="1">
        <name>[2Fe-2S] cluster</name>
        <dbReference type="ChEBI" id="CHEBI:190135"/>
    </cofactor>
</comment>
<comment type="cofactor">
    <cofactor evidence="1">
        <name>[4Fe-4S] cluster</name>
        <dbReference type="ChEBI" id="CHEBI:49883"/>
    </cofactor>
</comment>
<comment type="subunit">
    <text evidence="1">Monomer. Interacts with tah18. Interacts with mia40.</text>
</comment>
<comment type="subcellular location">
    <subcellularLocation>
        <location evidence="1">Cytoplasm</location>
    </subcellularLocation>
    <subcellularLocation>
        <location evidence="1">Mitochondrion intermembrane space</location>
    </subcellularLocation>
</comment>
<comment type="domain">
    <text evidence="1">The C-terminal domain binds 2 Fe-S clusters but is otherwise mostly in an intrinsically disordered conformation.</text>
</comment>
<comment type="domain">
    <text evidence="1">The N-terminal domain has structural similarity with S-adenosyl-L-methionine-dependent methyltransferases, but does not bind S-adenosyl-L-methionine. It is required for correct assembly of the 2 Fe-S clusters.</text>
</comment>
<comment type="domain">
    <text evidence="1">The twin Cx2C motifs are involved in the recognition by the mitochondrial mia40-erv1 disulfide relay system. The formation of 2 disulfide bonds in the Cx2C motifs through dithiol/disulfide exchange reactions effectively traps the protein in the mitochondrial intermembrane space.</text>
</comment>
<comment type="similarity">
    <text evidence="1">Belongs to the anamorsin family.</text>
</comment>
<feature type="chain" id="PRO_0000324868" description="Fe-S cluster assembly protein dre2">
    <location>
        <begin position="1"/>
        <end position="333"/>
    </location>
</feature>
<feature type="region of interest" description="Disordered" evidence="2">
    <location>
        <begin position="1"/>
        <end position="29"/>
    </location>
</feature>
<feature type="region of interest" description="N-terminal SAM-like domain" evidence="1">
    <location>
        <begin position="23"/>
        <end position="158"/>
    </location>
</feature>
<feature type="region of interest" description="Linker" evidence="1">
    <location>
        <begin position="159"/>
        <end position="225"/>
    </location>
</feature>
<feature type="region of interest" description="Fe-S binding site A" evidence="1">
    <location>
        <begin position="235"/>
        <end position="251"/>
    </location>
</feature>
<feature type="region of interest" description="Fe-S binding site B" evidence="1">
    <location>
        <begin position="296"/>
        <end position="310"/>
    </location>
</feature>
<feature type="short sequence motif" description="Cx2C motif 1" evidence="1">
    <location>
        <begin position="296"/>
        <end position="299"/>
    </location>
</feature>
<feature type="short sequence motif" description="Cx2C motif 2" evidence="1">
    <location>
        <begin position="307"/>
        <end position="310"/>
    </location>
</feature>
<feature type="compositionally biased region" description="Polar residues" evidence="2">
    <location>
        <begin position="7"/>
        <end position="28"/>
    </location>
</feature>
<feature type="binding site" evidence="1">
    <location>
        <position position="235"/>
    </location>
    <ligand>
        <name>[2Fe-2S] cluster</name>
        <dbReference type="ChEBI" id="CHEBI:190135"/>
    </ligand>
</feature>
<feature type="binding site" evidence="1">
    <location>
        <position position="246"/>
    </location>
    <ligand>
        <name>[2Fe-2S] cluster</name>
        <dbReference type="ChEBI" id="CHEBI:190135"/>
    </ligand>
</feature>
<feature type="binding site" evidence="1">
    <location>
        <position position="249"/>
    </location>
    <ligand>
        <name>[2Fe-2S] cluster</name>
        <dbReference type="ChEBI" id="CHEBI:190135"/>
    </ligand>
</feature>
<feature type="binding site" evidence="1">
    <location>
        <position position="251"/>
    </location>
    <ligand>
        <name>[2Fe-2S] cluster</name>
        <dbReference type="ChEBI" id="CHEBI:190135"/>
    </ligand>
</feature>
<feature type="binding site" evidence="1">
    <location>
        <position position="296"/>
    </location>
    <ligand>
        <name>[4Fe-4S] cluster</name>
        <dbReference type="ChEBI" id="CHEBI:49883"/>
    </ligand>
</feature>
<feature type="binding site" evidence="1">
    <location>
        <position position="299"/>
    </location>
    <ligand>
        <name>[4Fe-4S] cluster</name>
        <dbReference type="ChEBI" id="CHEBI:49883"/>
    </ligand>
</feature>
<feature type="binding site" evidence="1">
    <location>
        <position position="307"/>
    </location>
    <ligand>
        <name>[4Fe-4S] cluster</name>
        <dbReference type="ChEBI" id="CHEBI:49883"/>
    </ligand>
</feature>
<feature type="binding site" evidence="1">
    <location>
        <position position="310"/>
    </location>
    <ligand>
        <name>[4Fe-4S] cluster</name>
        <dbReference type="ChEBI" id="CHEBI:49883"/>
    </ligand>
</feature>